<dbReference type="EC" id="2.1.1.98" evidence="1"/>
<dbReference type="EMBL" id="AP006878">
    <property type="protein sequence ID" value="BAD84295.1"/>
    <property type="molecule type" value="Genomic_DNA"/>
</dbReference>
<dbReference type="RefSeq" id="WP_011249061.1">
    <property type="nucleotide sequence ID" value="NC_006624.1"/>
</dbReference>
<dbReference type="SMR" id="Q5JFE7"/>
<dbReference type="FunCoup" id="Q5JFE7">
    <property type="interactions" value="177"/>
</dbReference>
<dbReference type="STRING" id="69014.TK0106"/>
<dbReference type="EnsemblBacteria" id="BAD84295">
    <property type="protein sequence ID" value="BAD84295"/>
    <property type="gene ID" value="TK0106"/>
</dbReference>
<dbReference type="GeneID" id="78446611"/>
<dbReference type="KEGG" id="tko:TK0106"/>
<dbReference type="PATRIC" id="fig|69014.16.peg.106"/>
<dbReference type="eggNOG" id="arCOG04161">
    <property type="taxonomic scope" value="Archaea"/>
</dbReference>
<dbReference type="HOGENOM" id="CLU_066040_0_0_2"/>
<dbReference type="InParanoid" id="Q5JFE7"/>
<dbReference type="OrthoDB" id="39139at2157"/>
<dbReference type="PhylomeDB" id="Q5JFE7"/>
<dbReference type="UniPathway" id="UPA00559"/>
<dbReference type="Proteomes" id="UP000000536">
    <property type="component" value="Chromosome"/>
</dbReference>
<dbReference type="GO" id="GO:0004164">
    <property type="term" value="F:diphthine synthase activity"/>
    <property type="evidence" value="ECO:0007669"/>
    <property type="project" value="UniProtKB-UniRule"/>
</dbReference>
<dbReference type="GO" id="GO:0032259">
    <property type="term" value="P:methylation"/>
    <property type="evidence" value="ECO:0007669"/>
    <property type="project" value="UniProtKB-KW"/>
</dbReference>
<dbReference type="GO" id="GO:0017183">
    <property type="term" value="P:protein histidyl modification to diphthamide"/>
    <property type="evidence" value="ECO:0007669"/>
    <property type="project" value="UniProtKB-UniRule"/>
</dbReference>
<dbReference type="CDD" id="cd11647">
    <property type="entry name" value="DHP5_DphB"/>
    <property type="match status" value="1"/>
</dbReference>
<dbReference type="FunFam" id="3.30.950.10:FF:000004">
    <property type="entry name" value="Diphthine synthase putative"/>
    <property type="match status" value="1"/>
</dbReference>
<dbReference type="FunFam" id="3.40.1010.10:FF:000004">
    <property type="entry name" value="Putative diphthine synthase"/>
    <property type="match status" value="1"/>
</dbReference>
<dbReference type="Gene3D" id="3.40.1010.10">
    <property type="entry name" value="Cobalt-precorrin-4 Transmethylase, Domain 1"/>
    <property type="match status" value="1"/>
</dbReference>
<dbReference type="Gene3D" id="3.30.950.10">
    <property type="entry name" value="Methyltransferase, Cobalt-precorrin-4 Transmethylase, Domain 2"/>
    <property type="match status" value="1"/>
</dbReference>
<dbReference type="HAMAP" id="MF_01084">
    <property type="entry name" value="Diphthine_synth"/>
    <property type="match status" value="1"/>
</dbReference>
<dbReference type="InterPro" id="IPR000878">
    <property type="entry name" value="4pyrrol_Mease"/>
</dbReference>
<dbReference type="InterPro" id="IPR035996">
    <property type="entry name" value="4pyrrol_Methylase_sf"/>
</dbReference>
<dbReference type="InterPro" id="IPR014777">
    <property type="entry name" value="4pyrrole_Mease_sub1"/>
</dbReference>
<dbReference type="InterPro" id="IPR014776">
    <property type="entry name" value="4pyrrole_Mease_sub2"/>
</dbReference>
<dbReference type="InterPro" id="IPR004551">
    <property type="entry name" value="Dphthn_synthase"/>
</dbReference>
<dbReference type="NCBIfam" id="TIGR00522">
    <property type="entry name" value="dph5"/>
    <property type="match status" value="1"/>
</dbReference>
<dbReference type="PANTHER" id="PTHR10882:SF0">
    <property type="entry name" value="DIPHTHINE METHYL ESTER SYNTHASE"/>
    <property type="match status" value="1"/>
</dbReference>
<dbReference type="PANTHER" id="PTHR10882">
    <property type="entry name" value="DIPHTHINE SYNTHASE"/>
    <property type="match status" value="1"/>
</dbReference>
<dbReference type="Pfam" id="PF00590">
    <property type="entry name" value="TP_methylase"/>
    <property type="match status" value="1"/>
</dbReference>
<dbReference type="PIRSF" id="PIRSF036432">
    <property type="entry name" value="Diphthine_synth"/>
    <property type="match status" value="1"/>
</dbReference>
<dbReference type="SUPFAM" id="SSF53790">
    <property type="entry name" value="Tetrapyrrole methylase"/>
    <property type="match status" value="1"/>
</dbReference>
<comment type="function">
    <text evidence="1">S-adenosyl-L-methionine-dependent methyltransferase that catalyzes the trimethylation of the amino group of the modified target histidine residue in translation elongation factor 2 (EF-2), to form an intermediate called diphthine. The three successive methylation reactions represent the second step of diphthamide biosynthesis.</text>
</comment>
<comment type="catalytic activity">
    <reaction evidence="1">
        <text>2-[(3S)-amino-3-carboxypropyl]-L-histidyl-[translation elongation factor 2] + 3 S-adenosyl-L-methionine = diphthine-[translation elongation factor 2] + 3 S-adenosyl-L-homocysteine + 3 H(+)</text>
        <dbReference type="Rhea" id="RHEA:36415"/>
        <dbReference type="Rhea" id="RHEA-COMP:9749"/>
        <dbReference type="Rhea" id="RHEA-COMP:10172"/>
        <dbReference type="ChEBI" id="CHEBI:15378"/>
        <dbReference type="ChEBI" id="CHEBI:57856"/>
        <dbReference type="ChEBI" id="CHEBI:59789"/>
        <dbReference type="ChEBI" id="CHEBI:73995"/>
        <dbReference type="ChEBI" id="CHEBI:82696"/>
        <dbReference type="EC" id="2.1.1.98"/>
    </reaction>
</comment>
<comment type="pathway">
    <text evidence="1">Protein modification; peptidyl-diphthamide biosynthesis.</text>
</comment>
<comment type="subunit">
    <text evidence="1">Homodimer.</text>
</comment>
<comment type="similarity">
    <text evidence="1">Belongs to the diphthine synthase family.</text>
</comment>
<feature type="chain" id="PRO_0000156127" description="Diphthine synthase">
    <location>
        <begin position="1"/>
        <end position="264"/>
    </location>
</feature>
<feature type="binding site" evidence="1">
    <location>
        <position position="10"/>
    </location>
    <ligand>
        <name>S-adenosyl-L-methionine</name>
        <dbReference type="ChEBI" id="CHEBI:59789"/>
    </ligand>
</feature>
<feature type="binding site" evidence="1">
    <location>
        <position position="87"/>
    </location>
    <ligand>
        <name>S-adenosyl-L-methionine</name>
        <dbReference type="ChEBI" id="CHEBI:59789"/>
    </ligand>
</feature>
<feature type="binding site" evidence="1">
    <location>
        <position position="90"/>
    </location>
    <ligand>
        <name>S-adenosyl-L-methionine</name>
        <dbReference type="ChEBI" id="CHEBI:59789"/>
    </ligand>
</feature>
<feature type="binding site" evidence="1">
    <location>
        <begin position="115"/>
        <end position="116"/>
    </location>
    <ligand>
        <name>S-adenosyl-L-methionine</name>
        <dbReference type="ChEBI" id="CHEBI:59789"/>
    </ligand>
</feature>
<feature type="binding site" evidence="1">
    <location>
        <position position="166"/>
    </location>
    <ligand>
        <name>S-adenosyl-L-methionine</name>
        <dbReference type="ChEBI" id="CHEBI:59789"/>
    </ligand>
</feature>
<feature type="binding site" evidence="1">
    <location>
        <position position="209"/>
    </location>
    <ligand>
        <name>S-adenosyl-L-methionine</name>
        <dbReference type="ChEBI" id="CHEBI:59789"/>
    </ligand>
</feature>
<feature type="binding site" evidence="1">
    <location>
        <position position="234"/>
    </location>
    <ligand>
        <name>S-adenosyl-L-methionine</name>
        <dbReference type="ChEBI" id="CHEBI:59789"/>
    </ligand>
</feature>
<keyword id="KW-0489">Methyltransferase</keyword>
<keyword id="KW-1185">Reference proteome</keyword>
<keyword id="KW-0949">S-adenosyl-L-methionine</keyword>
<keyword id="KW-0808">Transferase</keyword>
<proteinExistence type="inferred from homology"/>
<organism>
    <name type="scientific">Thermococcus kodakarensis (strain ATCC BAA-918 / JCM 12380 / KOD1)</name>
    <name type="common">Pyrococcus kodakaraensis (strain KOD1)</name>
    <dbReference type="NCBI Taxonomy" id="69014"/>
    <lineage>
        <taxon>Archaea</taxon>
        <taxon>Methanobacteriati</taxon>
        <taxon>Methanobacteriota</taxon>
        <taxon>Thermococci</taxon>
        <taxon>Thermococcales</taxon>
        <taxon>Thermococcaceae</taxon>
        <taxon>Thermococcus</taxon>
    </lineage>
</organism>
<evidence type="ECO:0000255" key="1">
    <source>
        <dbReference type="HAMAP-Rule" id="MF_01084"/>
    </source>
</evidence>
<protein>
    <recommendedName>
        <fullName evidence="1">Diphthine synthase</fullName>
        <ecNumber evidence="1">2.1.1.98</ecNumber>
    </recommendedName>
    <alternativeName>
        <fullName evidence="1">Diphthamide biosynthesis methyltransferase</fullName>
    </alternativeName>
</protein>
<reference key="1">
    <citation type="journal article" date="2005" name="Genome Res.">
        <title>Complete genome sequence of the hyperthermophilic archaeon Thermococcus kodakaraensis KOD1 and comparison with Pyrococcus genomes.</title>
        <authorList>
            <person name="Fukui T."/>
            <person name="Atomi H."/>
            <person name="Kanai T."/>
            <person name="Matsumi R."/>
            <person name="Fujiwara S."/>
            <person name="Imanaka T."/>
        </authorList>
    </citation>
    <scope>NUCLEOTIDE SEQUENCE [LARGE SCALE GENOMIC DNA]</scope>
    <source>
        <strain>ATCC BAA-918 / JCM 12380 / KOD1</strain>
    </source>
</reference>
<name>DPHB_THEKO</name>
<gene>
    <name evidence="1" type="primary">dphB</name>
    <name type="ordered locus">TK0106</name>
</gene>
<sequence>MVLYFIGLGLYDEKDITLKGLETARRCDKVFAEFYTSLLAGTTLEKIEELIGKPIVRLSREDVELNFERIVLPEAKDKDVAFLTAGDPMVATTHSDLRIRAKKAGVKSYVIHAPSIYSAVAITGLQIYKFGKSATVAYPEKNWFPTSHYDVIRDNKERGLHTLLFLDIKADQNRYMTANEAMEILLKVEEMKGEGVFTPETLVVVLARAGSLEPTLRAGYVRELINEDFGRQPHVLIVPGRLHIVEAEYLVEFAGAPEKILEEV</sequence>
<accession>Q5JFE7</accession>